<reference key="1">
    <citation type="journal article" date="2005" name="Nature">
        <title>The map-based sequence of the rice genome.</title>
        <authorList>
            <consortium name="International rice genome sequencing project (IRGSP)"/>
        </authorList>
    </citation>
    <scope>NUCLEOTIDE SEQUENCE [LARGE SCALE GENOMIC DNA]</scope>
    <source>
        <strain>cv. Nipponbare</strain>
    </source>
</reference>
<reference key="2">
    <citation type="journal article" date="2008" name="Nucleic Acids Res.">
        <title>The rice annotation project database (RAP-DB): 2008 update.</title>
        <authorList>
            <consortium name="The rice annotation project (RAP)"/>
        </authorList>
    </citation>
    <scope>GENOME REANNOTATION</scope>
    <source>
        <strain>cv. Nipponbare</strain>
    </source>
</reference>
<reference key="3">
    <citation type="journal article" date="2013" name="Rice">
        <title>Improvement of the Oryza sativa Nipponbare reference genome using next generation sequence and optical map data.</title>
        <authorList>
            <person name="Kawahara Y."/>
            <person name="de la Bastide M."/>
            <person name="Hamilton J.P."/>
            <person name="Kanamori H."/>
            <person name="McCombie W.R."/>
            <person name="Ouyang S."/>
            <person name="Schwartz D.C."/>
            <person name="Tanaka T."/>
            <person name="Wu J."/>
            <person name="Zhou S."/>
            <person name="Childs K.L."/>
            <person name="Davidson R.M."/>
            <person name="Lin H."/>
            <person name="Quesada-Ocampo L."/>
            <person name="Vaillancourt B."/>
            <person name="Sakai H."/>
            <person name="Lee S.S."/>
            <person name="Kim J."/>
            <person name="Numa H."/>
            <person name="Itoh T."/>
            <person name="Buell C.R."/>
            <person name="Matsumoto T."/>
        </authorList>
    </citation>
    <scope>GENOME REANNOTATION</scope>
    <source>
        <strain>cv. Nipponbare</strain>
    </source>
</reference>
<reference key="4">
    <citation type="journal article" date="2005" name="PLoS Biol.">
        <title>The genomes of Oryza sativa: a history of duplications.</title>
        <authorList>
            <person name="Yu J."/>
            <person name="Wang J."/>
            <person name="Lin W."/>
            <person name="Li S."/>
            <person name="Li H."/>
            <person name="Zhou J."/>
            <person name="Ni P."/>
            <person name="Dong W."/>
            <person name="Hu S."/>
            <person name="Zeng C."/>
            <person name="Zhang J."/>
            <person name="Zhang Y."/>
            <person name="Li R."/>
            <person name="Xu Z."/>
            <person name="Li S."/>
            <person name="Li X."/>
            <person name="Zheng H."/>
            <person name="Cong L."/>
            <person name="Lin L."/>
            <person name="Yin J."/>
            <person name="Geng J."/>
            <person name="Li G."/>
            <person name="Shi J."/>
            <person name="Liu J."/>
            <person name="Lv H."/>
            <person name="Li J."/>
            <person name="Wang J."/>
            <person name="Deng Y."/>
            <person name="Ran L."/>
            <person name="Shi X."/>
            <person name="Wang X."/>
            <person name="Wu Q."/>
            <person name="Li C."/>
            <person name="Ren X."/>
            <person name="Wang J."/>
            <person name="Wang X."/>
            <person name="Li D."/>
            <person name="Liu D."/>
            <person name="Zhang X."/>
            <person name="Ji Z."/>
            <person name="Zhao W."/>
            <person name="Sun Y."/>
            <person name="Zhang Z."/>
            <person name="Bao J."/>
            <person name="Han Y."/>
            <person name="Dong L."/>
            <person name="Ji J."/>
            <person name="Chen P."/>
            <person name="Wu S."/>
            <person name="Liu J."/>
            <person name="Xiao Y."/>
            <person name="Bu D."/>
            <person name="Tan J."/>
            <person name="Yang L."/>
            <person name="Ye C."/>
            <person name="Zhang J."/>
            <person name="Xu J."/>
            <person name="Zhou Y."/>
            <person name="Yu Y."/>
            <person name="Zhang B."/>
            <person name="Zhuang S."/>
            <person name="Wei H."/>
            <person name="Liu B."/>
            <person name="Lei M."/>
            <person name="Yu H."/>
            <person name="Li Y."/>
            <person name="Xu H."/>
            <person name="Wei S."/>
            <person name="He X."/>
            <person name="Fang L."/>
            <person name="Zhang Z."/>
            <person name="Zhang Y."/>
            <person name="Huang X."/>
            <person name="Su Z."/>
            <person name="Tong W."/>
            <person name="Li J."/>
            <person name="Tong Z."/>
            <person name="Li S."/>
            <person name="Ye J."/>
            <person name="Wang L."/>
            <person name="Fang L."/>
            <person name="Lei T."/>
            <person name="Chen C.-S."/>
            <person name="Chen H.-C."/>
            <person name="Xu Z."/>
            <person name="Li H."/>
            <person name="Huang H."/>
            <person name="Zhang F."/>
            <person name="Xu H."/>
            <person name="Li N."/>
            <person name="Zhao C."/>
            <person name="Li S."/>
            <person name="Dong L."/>
            <person name="Huang Y."/>
            <person name="Li L."/>
            <person name="Xi Y."/>
            <person name="Qi Q."/>
            <person name="Li W."/>
            <person name="Zhang B."/>
            <person name="Hu W."/>
            <person name="Zhang Y."/>
            <person name="Tian X."/>
            <person name="Jiao Y."/>
            <person name="Liang X."/>
            <person name="Jin J."/>
            <person name="Gao L."/>
            <person name="Zheng W."/>
            <person name="Hao B."/>
            <person name="Liu S.-M."/>
            <person name="Wang W."/>
            <person name="Yuan L."/>
            <person name="Cao M."/>
            <person name="McDermott J."/>
            <person name="Samudrala R."/>
            <person name="Wang J."/>
            <person name="Wong G.K.-S."/>
            <person name="Yang H."/>
        </authorList>
    </citation>
    <scope>NUCLEOTIDE SEQUENCE [LARGE SCALE GENOMIC DNA]</scope>
    <source>
        <strain>cv. Nipponbare</strain>
    </source>
</reference>
<reference key="5">
    <citation type="journal article" date="2003" name="Science">
        <title>Collection, mapping, and annotation of over 28,000 cDNA clones from japonica rice.</title>
        <authorList>
            <consortium name="The rice full-length cDNA consortium"/>
        </authorList>
    </citation>
    <scope>NUCLEOTIDE SEQUENCE [LARGE SCALE MRNA]</scope>
    <source>
        <strain>cv. Nipponbare</strain>
    </source>
</reference>
<protein>
    <recommendedName>
        <fullName>Phosphopantothenate--cysteine ligase 2</fullName>
        <ecNumber>6.3.2.5</ecNumber>
    </recommendedName>
    <alternativeName>
        <fullName>Phosphopantothenoylcysteine synthetase 2</fullName>
        <shortName>PPC synthetase 2</shortName>
    </alternativeName>
</protein>
<dbReference type="EC" id="6.3.2.5"/>
<dbReference type="EMBL" id="AP003882">
    <property type="protein sequence ID" value="BAD05232.1"/>
    <property type="molecule type" value="Genomic_DNA"/>
</dbReference>
<dbReference type="EMBL" id="AP008214">
    <property type="protein sequence ID" value="BAF23030.1"/>
    <property type="status" value="ALT_SEQ"/>
    <property type="molecule type" value="Genomic_DNA"/>
</dbReference>
<dbReference type="EMBL" id="AP014964">
    <property type="status" value="NOT_ANNOTATED_CDS"/>
    <property type="molecule type" value="Genomic_DNA"/>
</dbReference>
<dbReference type="EMBL" id="CM000149">
    <property type="protein sequence ID" value="EEE53349.1"/>
    <property type="molecule type" value="Genomic_DNA"/>
</dbReference>
<dbReference type="EMBL" id="AK067868">
    <property type="status" value="NOT_ANNOTATED_CDS"/>
    <property type="molecule type" value="mRNA"/>
</dbReference>
<dbReference type="RefSeq" id="XP_015648433.1">
    <property type="nucleotide sequence ID" value="XM_015792947.1"/>
</dbReference>
<dbReference type="RefSeq" id="XP_015648435.1">
    <property type="nucleotide sequence ID" value="XM_015792949.1"/>
</dbReference>
<dbReference type="SMR" id="Q0J7N5"/>
<dbReference type="FunCoup" id="Q0J7N5">
    <property type="interactions" value="3449"/>
</dbReference>
<dbReference type="STRING" id="39947.Q0J7N5"/>
<dbReference type="PaxDb" id="39947-Q0J7N5"/>
<dbReference type="KEGG" id="dosa:Os08g0176100"/>
<dbReference type="eggNOG" id="KOG2728">
    <property type="taxonomic scope" value="Eukaryota"/>
</dbReference>
<dbReference type="HOGENOM" id="CLU_042326_0_1_1"/>
<dbReference type="InParanoid" id="Q0J7N5"/>
<dbReference type="OrthoDB" id="70224at2759"/>
<dbReference type="UniPathway" id="UPA00241">
    <property type="reaction ID" value="UER00353"/>
</dbReference>
<dbReference type="Proteomes" id="UP000000763">
    <property type="component" value="Chromosome 8"/>
</dbReference>
<dbReference type="Proteomes" id="UP000007752">
    <property type="component" value="Chromosome 12"/>
</dbReference>
<dbReference type="Proteomes" id="UP000059680">
    <property type="component" value="Chromosome 8"/>
</dbReference>
<dbReference type="GO" id="GO:0004632">
    <property type="term" value="F:phosphopantothenate--cysteine ligase activity"/>
    <property type="evidence" value="ECO:0007669"/>
    <property type="project" value="UniProtKB-EC"/>
</dbReference>
<dbReference type="GO" id="GO:0015937">
    <property type="term" value="P:coenzyme A biosynthetic process"/>
    <property type="evidence" value="ECO:0007669"/>
    <property type="project" value="UniProtKB-UniPathway"/>
</dbReference>
<dbReference type="Gene3D" id="3.40.50.10300">
    <property type="entry name" value="CoaB-like"/>
    <property type="match status" value="1"/>
</dbReference>
<dbReference type="InterPro" id="IPR035929">
    <property type="entry name" value="CoaB-like_sf"/>
</dbReference>
<dbReference type="InterPro" id="IPR007085">
    <property type="entry name" value="DNA/pantothenate-metab_flavo_C"/>
</dbReference>
<dbReference type="PANTHER" id="PTHR36032">
    <property type="entry name" value="PHOSPHOPANTOTHENATE--CYSTEINE LIGASE 2"/>
    <property type="match status" value="1"/>
</dbReference>
<dbReference type="PANTHER" id="PTHR36032:SF1">
    <property type="entry name" value="PHOSPHOPANTOTHENATE--CYSTEINE LIGASE 2"/>
    <property type="match status" value="1"/>
</dbReference>
<dbReference type="Pfam" id="PF04127">
    <property type="entry name" value="DFP"/>
    <property type="match status" value="2"/>
</dbReference>
<dbReference type="SUPFAM" id="SSF102645">
    <property type="entry name" value="CoaB-like"/>
    <property type="match status" value="1"/>
</dbReference>
<keyword id="KW-0173">Coenzyme A biosynthesis</keyword>
<keyword id="KW-0436">Ligase</keyword>
<keyword id="KW-1185">Reference proteome</keyword>
<gene>
    <name type="ordered locus">Os08g0176100</name>
    <name type="ordered locus">LOC_Os08g07880</name>
    <name type="ORF">OJ1134_B10.16</name>
    <name type="ORF">OsJ_36371</name>
</gene>
<accession>Q0J7N5</accession>
<accession>Q6ZK99</accession>
<name>PPCS2_ORYSJ</name>
<feature type="chain" id="PRO_0000429410" description="Phosphopantothenate--cysteine ligase 2">
    <location>
        <begin position="1"/>
        <end position="323"/>
    </location>
</feature>
<feature type="sequence conflict" description="In Ref. 5; AK067868." evidence="2" ref="5">
    <original>P</original>
    <variation>L</variation>
    <location>
        <position position="211"/>
    </location>
</feature>
<organism>
    <name type="scientific">Oryza sativa subsp. japonica</name>
    <name type="common">Rice</name>
    <dbReference type="NCBI Taxonomy" id="39947"/>
    <lineage>
        <taxon>Eukaryota</taxon>
        <taxon>Viridiplantae</taxon>
        <taxon>Streptophyta</taxon>
        <taxon>Embryophyta</taxon>
        <taxon>Tracheophyta</taxon>
        <taxon>Spermatophyta</taxon>
        <taxon>Magnoliopsida</taxon>
        <taxon>Liliopsida</taxon>
        <taxon>Poales</taxon>
        <taxon>Poaceae</taxon>
        <taxon>BOP clade</taxon>
        <taxon>Oryzoideae</taxon>
        <taxon>Oryzeae</taxon>
        <taxon>Oryzinae</taxon>
        <taxon>Oryza</taxon>
        <taxon>Oryza sativa</taxon>
    </lineage>
</organism>
<proteinExistence type="evidence at transcript level"/>
<evidence type="ECO:0000250" key="1"/>
<evidence type="ECO:0000305" key="2"/>
<comment type="function">
    <text evidence="1">Catalyzes the first step in the biosynthesis of coenzyme A from vitamin B5, where cysteine is conjugated to 4'-phosphopantothenate to form 4-phosphopantothenoylcysteine.</text>
</comment>
<comment type="catalytic activity">
    <reaction>
        <text>(R)-4'-phosphopantothenate + L-cysteine + CTP = N-[(R)-4-phosphopantothenoyl]-L-cysteine + CMP + diphosphate + H(+)</text>
        <dbReference type="Rhea" id="RHEA:19397"/>
        <dbReference type="ChEBI" id="CHEBI:10986"/>
        <dbReference type="ChEBI" id="CHEBI:15378"/>
        <dbReference type="ChEBI" id="CHEBI:33019"/>
        <dbReference type="ChEBI" id="CHEBI:35235"/>
        <dbReference type="ChEBI" id="CHEBI:37563"/>
        <dbReference type="ChEBI" id="CHEBI:59458"/>
        <dbReference type="ChEBI" id="CHEBI:60377"/>
        <dbReference type="EC" id="6.3.2.5"/>
    </reaction>
</comment>
<comment type="pathway">
    <text>Cofactor biosynthesis; coenzyme A biosynthesis; CoA from (R)-pantothenate: step 2/5.</text>
</comment>
<comment type="subunit">
    <text evidence="1">Homodimer.</text>
</comment>
<comment type="similarity">
    <text evidence="2">Belongs to the PPC synthetase family.</text>
</comment>
<comment type="sequence caution" evidence="2">
    <conflict type="erroneous gene model prediction">
        <sequence resource="EMBL-CDS" id="BAF23030"/>
    </conflict>
</comment>
<sequence length="323" mass="35833">MAADPTTGGGEAESFFRAAPPLRDQDRVAGDLADFVARHSGSGGGGRLAGVVCVTSGGTTVPLEQRCVRYIDNFSSGQRGAASTEYFLKAGYAVIFIYRRGSKQPYCRFLPEDSFLDLFELGEESDIQVPESHAAVVKTAIRNYRKAIDEGLLLKLPFTTIFEYLQLLQMVGTAMNCLGRQGMFYLAAAVSDFYVPWESMAKHKIESASGPLNMQLNQVPKMLFILRKQWAPSAFCVSFKLETDPDILLQKAEAALRKYGMNVVVANELANYKDVVVMVTSNGRTTVRRPSKEDDVEEQLIDLLVEMHSEHIMQLNQDVHKLT</sequence>